<comment type="function">
    <text evidence="1">Catalyzes oxygen-dependent 5-hydroxyuridine (ho5U) modification at position 34 in tRNAs.</text>
</comment>
<comment type="catalytic activity">
    <reaction evidence="1">
        <text>uridine(34) in tRNA + AH2 + O2 = 5-hydroxyuridine(34) in tRNA + A + H2O</text>
        <dbReference type="Rhea" id="RHEA:64224"/>
        <dbReference type="Rhea" id="RHEA-COMP:11727"/>
        <dbReference type="Rhea" id="RHEA-COMP:13381"/>
        <dbReference type="ChEBI" id="CHEBI:13193"/>
        <dbReference type="ChEBI" id="CHEBI:15377"/>
        <dbReference type="ChEBI" id="CHEBI:15379"/>
        <dbReference type="ChEBI" id="CHEBI:17499"/>
        <dbReference type="ChEBI" id="CHEBI:65315"/>
        <dbReference type="ChEBI" id="CHEBI:136877"/>
    </reaction>
</comment>
<comment type="similarity">
    <text evidence="1">Belongs to the TrhO family.</text>
</comment>
<dbReference type="EC" id="1.14.-.-" evidence="1"/>
<dbReference type="EMBL" id="CP000614">
    <property type="protein sequence ID" value="ABO55402.1"/>
    <property type="molecule type" value="Genomic_DNA"/>
</dbReference>
<dbReference type="SMR" id="A4JGJ9"/>
<dbReference type="KEGG" id="bvi:Bcep1808_2403"/>
<dbReference type="eggNOG" id="COG1054">
    <property type="taxonomic scope" value="Bacteria"/>
</dbReference>
<dbReference type="HOGENOM" id="CLU_038878_0_1_4"/>
<dbReference type="Proteomes" id="UP000002287">
    <property type="component" value="Chromosome 1"/>
</dbReference>
<dbReference type="GO" id="GO:0016705">
    <property type="term" value="F:oxidoreductase activity, acting on paired donors, with incorporation or reduction of molecular oxygen"/>
    <property type="evidence" value="ECO:0007669"/>
    <property type="project" value="UniProtKB-UniRule"/>
</dbReference>
<dbReference type="GO" id="GO:0006400">
    <property type="term" value="P:tRNA modification"/>
    <property type="evidence" value="ECO:0007669"/>
    <property type="project" value="UniProtKB-UniRule"/>
</dbReference>
<dbReference type="CDD" id="cd01518">
    <property type="entry name" value="RHOD_YceA"/>
    <property type="match status" value="1"/>
</dbReference>
<dbReference type="Gene3D" id="3.30.70.100">
    <property type="match status" value="1"/>
</dbReference>
<dbReference type="Gene3D" id="3.40.250.10">
    <property type="entry name" value="Rhodanese-like domain"/>
    <property type="match status" value="1"/>
</dbReference>
<dbReference type="HAMAP" id="MF_00469">
    <property type="entry name" value="TrhO"/>
    <property type="match status" value="1"/>
</dbReference>
<dbReference type="InterPro" id="IPR001763">
    <property type="entry name" value="Rhodanese-like_dom"/>
</dbReference>
<dbReference type="InterPro" id="IPR036873">
    <property type="entry name" value="Rhodanese-like_dom_sf"/>
</dbReference>
<dbReference type="InterPro" id="IPR020936">
    <property type="entry name" value="TrhO"/>
</dbReference>
<dbReference type="InterPro" id="IPR040503">
    <property type="entry name" value="TRHO_N"/>
</dbReference>
<dbReference type="NCBIfam" id="NF003703">
    <property type="entry name" value="PRK05320.1"/>
    <property type="match status" value="1"/>
</dbReference>
<dbReference type="PANTHER" id="PTHR43268:SF3">
    <property type="entry name" value="RHODANESE-LIKE DOMAIN-CONTAINING PROTEIN 7-RELATED"/>
    <property type="match status" value="1"/>
</dbReference>
<dbReference type="PANTHER" id="PTHR43268">
    <property type="entry name" value="THIOSULFATE SULFURTRANSFERASE/RHODANESE-LIKE DOMAIN-CONTAINING PROTEIN 2"/>
    <property type="match status" value="1"/>
</dbReference>
<dbReference type="Pfam" id="PF00581">
    <property type="entry name" value="Rhodanese"/>
    <property type="match status" value="1"/>
</dbReference>
<dbReference type="Pfam" id="PF17773">
    <property type="entry name" value="UPF0176_N"/>
    <property type="match status" value="1"/>
</dbReference>
<dbReference type="SMART" id="SM00450">
    <property type="entry name" value="RHOD"/>
    <property type="match status" value="1"/>
</dbReference>
<dbReference type="SUPFAM" id="SSF52821">
    <property type="entry name" value="Rhodanese/Cell cycle control phosphatase"/>
    <property type="match status" value="1"/>
</dbReference>
<dbReference type="PROSITE" id="PS50206">
    <property type="entry name" value="RHODANESE_3"/>
    <property type="match status" value="1"/>
</dbReference>
<proteinExistence type="inferred from homology"/>
<reference key="1">
    <citation type="submission" date="2007-03" db="EMBL/GenBank/DDBJ databases">
        <title>Complete sequence of chromosome 1 of Burkholderia vietnamiensis G4.</title>
        <authorList>
            <consortium name="US DOE Joint Genome Institute"/>
            <person name="Copeland A."/>
            <person name="Lucas S."/>
            <person name="Lapidus A."/>
            <person name="Barry K."/>
            <person name="Detter J.C."/>
            <person name="Glavina del Rio T."/>
            <person name="Hammon N."/>
            <person name="Israni S."/>
            <person name="Dalin E."/>
            <person name="Tice H."/>
            <person name="Pitluck S."/>
            <person name="Chain P."/>
            <person name="Malfatti S."/>
            <person name="Shin M."/>
            <person name="Vergez L."/>
            <person name="Schmutz J."/>
            <person name="Larimer F."/>
            <person name="Land M."/>
            <person name="Hauser L."/>
            <person name="Kyrpides N."/>
            <person name="Tiedje J."/>
            <person name="Richardson P."/>
        </authorList>
    </citation>
    <scope>NUCLEOTIDE SEQUENCE [LARGE SCALE GENOMIC DNA]</scope>
    <source>
        <strain>G4 / LMG 22486</strain>
    </source>
</reference>
<organism>
    <name type="scientific">Burkholderia vietnamiensis (strain G4 / LMG 22486)</name>
    <name type="common">Burkholderia cepacia (strain R1808)</name>
    <dbReference type="NCBI Taxonomy" id="269482"/>
    <lineage>
        <taxon>Bacteria</taxon>
        <taxon>Pseudomonadati</taxon>
        <taxon>Pseudomonadota</taxon>
        <taxon>Betaproteobacteria</taxon>
        <taxon>Burkholderiales</taxon>
        <taxon>Burkholderiaceae</taxon>
        <taxon>Burkholderia</taxon>
        <taxon>Burkholderia cepacia complex</taxon>
    </lineage>
</organism>
<evidence type="ECO:0000255" key="1">
    <source>
        <dbReference type="HAMAP-Rule" id="MF_00469"/>
    </source>
</evidence>
<accession>A4JGJ9</accession>
<name>TRHO_BURVG</name>
<feature type="chain" id="PRO_1000013733" description="tRNA uridine(34) hydroxylase">
    <location>
        <begin position="1"/>
        <end position="284"/>
    </location>
</feature>
<feature type="domain" description="Rhodanese" evidence="1">
    <location>
        <begin position="132"/>
        <end position="226"/>
    </location>
</feature>
<feature type="active site" description="Cysteine persulfide intermediate" evidence="1">
    <location>
        <position position="186"/>
    </location>
</feature>
<sequence>MTIVNLAAYHFVSLDAIEQWRPLVTARCNELGLRGTILLAPEGINLFIAGPREATDAFVDYLRHDPLFEGKFATLQFKESLSDSQPFRRMLVRLKREIITMKKPAIKPELGRAPSVDARTLKAWLDRGHDDDGRPVVMLDTRNAFEVDVGTFDDALDYRIDKFSQFPEVIDANRADLEGKTVVSFCTGGIRCEKAAIHMKEIGIDHVYQLEGGILKYFEEVGGAHYHGDCFVFDYRTALNPQLQPTESVTCFACRAVVTPQAQQSPDYVPGKSCPACAQAAAAA</sequence>
<protein>
    <recommendedName>
        <fullName evidence="1">tRNA uridine(34) hydroxylase</fullName>
        <ecNumber evidence="1">1.14.-.-</ecNumber>
    </recommendedName>
    <alternativeName>
        <fullName evidence="1">tRNA hydroxylation protein O</fullName>
    </alternativeName>
</protein>
<keyword id="KW-0560">Oxidoreductase</keyword>
<keyword id="KW-0819">tRNA processing</keyword>
<gene>
    <name evidence="1" type="primary">trhO</name>
    <name type="ordered locus">Bcep1808_2403</name>
</gene>